<sequence>MLLSEEPATLIHHTIENFNIAPDKTAVARVTESLATLQQARDLRVREAESSLKKLSRQLATHTSRHDDLVTSHSSADHASNIARLDTLKFRTAKAAADAETDAERLALTAADLKARLRELELQGVEGDAAANARRRDPVDDEVLLRLKVYRSLGIDIERDERDGEWSKAVIRNDRKGDVHVVNMDKKFSRFFYANYFWQTL</sequence>
<organism>
    <name type="scientific">Gibberella zeae (strain ATCC MYA-4620 / CBS 123657 / FGSC 9075 / NRRL 31084 / PH-1)</name>
    <name type="common">Wheat head blight fungus</name>
    <name type="synonym">Fusarium graminearum</name>
    <dbReference type="NCBI Taxonomy" id="229533"/>
    <lineage>
        <taxon>Eukaryota</taxon>
        <taxon>Fungi</taxon>
        <taxon>Dikarya</taxon>
        <taxon>Ascomycota</taxon>
        <taxon>Pezizomycotina</taxon>
        <taxon>Sordariomycetes</taxon>
        <taxon>Hypocreomycetidae</taxon>
        <taxon>Hypocreales</taxon>
        <taxon>Nectriaceae</taxon>
        <taxon>Fusarium</taxon>
    </lineage>
</organism>
<protein>
    <recommendedName>
        <fullName>Probable kinetochore protein SPC24</fullName>
    </recommendedName>
</protein>
<feature type="chain" id="PRO_0000246664" description="Probable kinetochore protein SPC24">
    <location>
        <begin position="1"/>
        <end position="201"/>
    </location>
</feature>
<feature type="coiled-coil region" evidence="3">
    <location>
        <begin position="39"/>
        <end position="124"/>
    </location>
</feature>
<accession>Q4IBU5</accession>
<accession>A0A0E0SJB9</accession>
<keyword id="KW-0131">Cell cycle</keyword>
<keyword id="KW-0132">Cell division</keyword>
<keyword id="KW-0137">Centromere</keyword>
<keyword id="KW-0158">Chromosome</keyword>
<keyword id="KW-0175">Coiled coil</keyword>
<keyword id="KW-0963">Cytoplasm</keyword>
<keyword id="KW-0206">Cytoskeleton</keyword>
<keyword id="KW-0995">Kinetochore</keyword>
<keyword id="KW-0498">Mitosis</keyword>
<keyword id="KW-0539">Nucleus</keyword>
<keyword id="KW-1185">Reference proteome</keyword>
<evidence type="ECO:0000250" key="1"/>
<evidence type="ECO:0000250" key="2">
    <source>
        <dbReference type="UniProtKB" id="Q9UST6"/>
    </source>
</evidence>
<evidence type="ECO:0000255" key="3"/>
<evidence type="ECO:0000305" key="4"/>
<proteinExistence type="inferred from homology"/>
<reference key="1">
    <citation type="journal article" date="2007" name="Science">
        <title>The Fusarium graminearum genome reveals a link between localized polymorphism and pathogen specialization.</title>
        <authorList>
            <person name="Cuomo C.A."/>
            <person name="Gueldener U."/>
            <person name="Xu J.-R."/>
            <person name="Trail F."/>
            <person name="Turgeon B.G."/>
            <person name="Di Pietro A."/>
            <person name="Walton J.D."/>
            <person name="Ma L.-J."/>
            <person name="Baker S.E."/>
            <person name="Rep M."/>
            <person name="Adam G."/>
            <person name="Antoniw J."/>
            <person name="Baldwin T."/>
            <person name="Calvo S.E."/>
            <person name="Chang Y.-L."/>
            <person name="DeCaprio D."/>
            <person name="Gale L.R."/>
            <person name="Gnerre S."/>
            <person name="Goswami R.S."/>
            <person name="Hammond-Kosack K."/>
            <person name="Harris L.J."/>
            <person name="Hilburn K."/>
            <person name="Kennell J.C."/>
            <person name="Kroken S."/>
            <person name="Magnuson J.K."/>
            <person name="Mannhaupt G."/>
            <person name="Mauceli E.W."/>
            <person name="Mewes H.-W."/>
            <person name="Mitterbauer R."/>
            <person name="Muehlbauer G."/>
            <person name="Muensterkoetter M."/>
            <person name="Nelson D."/>
            <person name="O'Donnell K."/>
            <person name="Ouellet T."/>
            <person name="Qi W."/>
            <person name="Quesneville H."/>
            <person name="Roncero M.I.G."/>
            <person name="Seong K.-Y."/>
            <person name="Tetko I.V."/>
            <person name="Urban M."/>
            <person name="Waalwijk C."/>
            <person name="Ward T.J."/>
            <person name="Yao J."/>
            <person name="Birren B.W."/>
            <person name="Kistler H.C."/>
        </authorList>
    </citation>
    <scope>NUCLEOTIDE SEQUENCE [LARGE SCALE GENOMIC DNA]</scope>
    <source>
        <strain>ATCC MYA-4620 / CBS 123657 / FGSC 9075 / NRRL 31084 / PH-1</strain>
    </source>
</reference>
<reference key="2">
    <citation type="journal article" date="2010" name="Nature">
        <title>Comparative genomics reveals mobile pathogenicity chromosomes in Fusarium.</title>
        <authorList>
            <person name="Ma L.-J."/>
            <person name="van der Does H.C."/>
            <person name="Borkovich K.A."/>
            <person name="Coleman J.J."/>
            <person name="Daboussi M.-J."/>
            <person name="Di Pietro A."/>
            <person name="Dufresne M."/>
            <person name="Freitag M."/>
            <person name="Grabherr M."/>
            <person name="Henrissat B."/>
            <person name="Houterman P.M."/>
            <person name="Kang S."/>
            <person name="Shim W.-B."/>
            <person name="Woloshuk C."/>
            <person name="Xie X."/>
            <person name="Xu J.-R."/>
            <person name="Antoniw J."/>
            <person name="Baker S.E."/>
            <person name="Bluhm B.H."/>
            <person name="Breakspear A."/>
            <person name="Brown D.W."/>
            <person name="Butchko R.A.E."/>
            <person name="Chapman S."/>
            <person name="Coulson R."/>
            <person name="Coutinho P.M."/>
            <person name="Danchin E.G.J."/>
            <person name="Diener A."/>
            <person name="Gale L.R."/>
            <person name="Gardiner D.M."/>
            <person name="Goff S."/>
            <person name="Hammond-Kosack K.E."/>
            <person name="Hilburn K."/>
            <person name="Hua-Van A."/>
            <person name="Jonkers W."/>
            <person name="Kazan K."/>
            <person name="Kodira C.D."/>
            <person name="Koehrsen M."/>
            <person name="Kumar L."/>
            <person name="Lee Y.-H."/>
            <person name="Li L."/>
            <person name="Manners J.M."/>
            <person name="Miranda-Saavedra D."/>
            <person name="Mukherjee M."/>
            <person name="Park G."/>
            <person name="Park J."/>
            <person name="Park S.-Y."/>
            <person name="Proctor R.H."/>
            <person name="Regev A."/>
            <person name="Ruiz-Roldan M.C."/>
            <person name="Sain D."/>
            <person name="Sakthikumar S."/>
            <person name="Sykes S."/>
            <person name="Schwartz D.C."/>
            <person name="Turgeon B.G."/>
            <person name="Wapinski I."/>
            <person name="Yoder O."/>
            <person name="Young S."/>
            <person name="Zeng Q."/>
            <person name="Zhou S."/>
            <person name="Galagan J."/>
            <person name="Cuomo C.A."/>
            <person name="Kistler H.C."/>
            <person name="Rep M."/>
        </authorList>
    </citation>
    <scope>GENOME REANNOTATION</scope>
    <source>
        <strain>ATCC MYA-4620 / CBS 123657 / FGSC 9075 / NRRL 31084 / PH-1</strain>
    </source>
</reference>
<reference key="3">
    <citation type="journal article" date="2015" name="BMC Genomics">
        <title>The completed genome sequence of the pathogenic ascomycete fungus Fusarium graminearum.</title>
        <authorList>
            <person name="King R."/>
            <person name="Urban M."/>
            <person name="Hammond-Kosack M.C.U."/>
            <person name="Hassani-Pak K."/>
            <person name="Hammond-Kosack K.E."/>
        </authorList>
    </citation>
    <scope>NUCLEOTIDE SEQUENCE [LARGE SCALE GENOMIC DNA]</scope>
    <source>
        <strain>ATCC MYA-4620 / CBS 123657 / FGSC 9075 / NRRL 31084 / PH-1</strain>
    </source>
</reference>
<comment type="function">
    <text evidence="1">Acts as a component of the essential kinetochore-associated NDC80 complex, which is required for chromosome segregation and spindle checkpoint activity.</text>
</comment>
<comment type="subunit">
    <text evidence="1">Component of the NDC80 complex, which consists of NDC80, NUF2, SPC24 and SPC25.</text>
</comment>
<comment type="subcellular location">
    <subcellularLocation>
        <location evidence="2">Nucleus</location>
    </subcellularLocation>
    <subcellularLocation>
        <location evidence="2">Chromosome</location>
        <location evidence="2">Centromere</location>
        <location evidence="2">Kinetochore</location>
    </subcellularLocation>
    <subcellularLocation>
        <location evidence="2">Cytoplasm</location>
        <location evidence="2">Cytoskeleton</location>
        <location evidence="2">Microtubule organizing center</location>
        <location evidence="2">Spindle pole body</location>
    </subcellularLocation>
    <text evidence="2">Associated with kinetochores.</text>
</comment>
<comment type="similarity">
    <text evidence="4">Belongs to the SPC24 family.</text>
</comment>
<gene>
    <name type="primary">SPC24</name>
    <name type="ORF">FGRRES_15023</name>
    <name type="ORF">FGSG_05312</name>
    <name type="ORF">FGSG_15023</name>
</gene>
<dbReference type="EMBL" id="DS231665">
    <property type="status" value="NOT_ANNOTATED_CDS"/>
    <property type="molecule type" value="Genomic_DNA"/>
</dbReference>
<dbReference type="EMBL" id="HG970334">
    <property type="protein sequence ID" value="CEF86532.1"/>
    <property type="molecule type" value="Genomic_DNA"/>
</dbReference>
<dbReference type="SMR" id="Q4IBU5"/>
<dbReference type="FunCoup" id="Q4IBU5">
    <property type="interactions" value="88"/>
</dbReference>
<dbReference type="STRING" id="229533.Q4IBU5"/>
<dbReference type="VEuPathDB" id="FungiDB:FGRAMPH1_01G17597"/>
<dbReference type="InParanoid" id="Q4IBU5"/>
<dbReference type="Proteomes" id="UP000070720">
    <property type="component" value="Chromosome 3"/>
</dbReference>
<dbReference type="GO" id="GO:0005737">
    <property type="term" value="C:cytoplasm"/>
    <property type="evidence" value="ECO:0007669"/>
    <property type="project" value="UniProtKB-KW"/>
</dbReference>
<dbReference type="GO" id="GO:0031262">
    <property type="term" value="C:Ndc80 complex"/>
    <property type="evidence" value="ECO:0000250"/>
    <property type="project" value="UniProtKB"/>
</dbReference>
<dbReference type="GO" id="GO:0005634">
    <property type="term" value="C:nucleus"/>
    <property type="evidence" value="ECO:0007669"/>
    <property type="project" value="UniProtKB-SubCell"/>
</dbReference>
<dbReference type="GO" id="GO:0005816">
    <property type="term" value="C:spindle pole body"/>
    <property type="evidence" value="ECO:0007669"/>
    <property type="project" value="UniProtKB-SubCell"/>
</dbReference>
<dbReference type="GO" id="GO:0008017">
    <property type="term" value="F:microtubule binding"/>
    <property type="evidence" value="ECO:0007669"/>
    <property type="project" value="TreeGrafter"/>
</dbReference>
<dbReference type="GO" id="GO:0051301">
    <property type="term" value="P:cell division"/>
    <property type="evidence" value="ECO:0007669"/>
    <property type="project" value="UniProtKB-KW"/>
</dbReference>
<dbReference type="GO" id="GO:0031134">
    <property type="term" value="P:sister chromatid biorientation"/>
    <property type="evidence" value="ECO:0000250"/>
    <property type="project" value="UniProtKB"/>
</dbReference>
<dbReference type="CDD" id="cd11565">
    <property type="entry name" value="RWD_Spc24"/>
    <property type="match status" value="1"/>
</dbReference>
<dbReference type="Gene3D" id="3.30.160.430">
    <property type="match status" value="1"/>
</dbReference>
<dbReference type="InterPro" id="IPR013252">
    <property type="entry name" value="Ndc80_Spc24"/>
</dbReference>
<dbReference type="InterPro" id="IPR038066">
    <property type="entry name" value="Spc24_Fungi_globular_sf"/>
</dbReference>
<dbReference type="PANTHER" id="PTHR22142">
    <property type="match status" value="1"/>
</dbReference>
<dbReference type="PANTHER" id="PTHR22142:SF2">
    <property type="entry name" value="KINETOCHORE PROTEIN SPC24"/>
    <property type="match status" value="1"/>
</dbReference>
<dbReference type="Pfam" id="PF08286">
    <property type="entry name" value="Spc24"/>
    <property type="match status" value="1"/>
</dbReference>
<dbReference type="SUPFAM" id="SSF143026">
    <property type="entry name" value="Kinetochore globular domain"/>
    <property type="match status" value="1"/>
</dbReference>
<name>SPC24_GIBZE</name>